<reference key="1">
    <citation type="journal article" date="1999" name="Science">
        <title>Genome sequence of the radioresistant bacterium Deinococcus radiodurans R1.</title>
        <authorList>
            <person name="White O."/>
            <person name="Eisen J.A."/>
            <person name="Heidelberg J.F."/>
            <person name="Hickey E.K."/>
            <person name="Peterson J.D."/>
            <person name="Dodson R.J."/>
            <person name="Haft D.H."/>
            <person name="Gwinn M.L."/>
            <person name="Nelson W.C."/>
            <person name="Richardson D.L."/>
            <person name="Moffat K.S."/>
            <person name="Qin H."/>
            <person name="Jiang L."/>
            <person name="Pamphile W."/>
            <person name="Crosby M."/>
            <person name="Shen M."/>
            <person name="Vamathevan J.J."/>
            <person name="Lam P."/>
            <person name="McDonald L.A."/>
            <person name="Utterback T.R."/>
            <person name="Zalewski C."/>
            <person name="Makarova K.S."/>
            <person name="Aravind L."/>
            <person name="Daly M.J."/>
            <person name="Minton K.W."/>
            <person name="Fleischmann R.D."/>
            <person name="Ketchum K.A."/>
            <person name="Nelson K.E."/>
            <person name="Salzberg S.L."/>
            <person name="Smith H.O."/>
            <person name="Venter J.C."/>
            <person name="Fraser C.M."/>
        </authorList>
    </citation>
    <scope>NUCLEOTIDE SEQUENCE [LARGE SCALE GENOMIC DNA]</scope>
    <source>
        <strain>ATCC 13939 / DSM 20539 / JCM 16871 / CCUG 27074 / LMG 4051 / NBRC 15346 / NCIMB 9279 / VKM B-1422 / R1</strain>
    </source>
</reference>
<feature type="chain" id="PRO_0000234154" description="Urease subunit alpha">
    <location>
        <begin position="1"/>
        <end position="568"/>
    </location>
</feature>
<feature type="domain" description="Urease" evidence="1">
    <location>
        <begin position="133"/>
        <end position="568"/>
    </location>
</feature>
<feature type="active site" description="Proton donor" evidence="1">
    <location>
        <position position="324"/>
    </location>
</feature>
<feature type="binding site" evidence="1">
    <location>
        <position position="138"/>
    </location>
    <ligand>
        <name>Ni(2+)</name>
        <dbReference type="ChEBI" id="CHEBI:49786"/>
        <label>1</label>
    </ligand>
</feature>
<feature type="binding site" evidence="1">
    <location>
        <position position="140"/>
    </location>
    <ligand>
        <name>Ni(2+)</name>
        <dbReference type="ChEBI" id="CHEBI:49786"/>
        <label>1</label>
    </ligand>
</feature>
<feature type="binding site" description="via carbamate group" evidence="1">
    <location>
        <position position="221"/>
    </location>
    <ligand>
        <name>Ni(2+)</name>
        <dbReference type="ChEBI" id="CHEBI:49786"/>
        <label>1</label>
    </ligand>
</feature>
<feature type="binding site" description="via carbamate group" evidence="1">
    <location>
        <position position="221"/>
    </location>
    <ligand>
        <name>Ni(2+)</name>
        <dbReference type="ChEBI" id="CHEBI:49786"/>
        <label>2</label>
    </ligand>
</feature>
<feature type="binding site" evidence="1">
    <location>
        <position position="223"/>
    </location>
    <ligand>
        <name>substrate</name>
    </ligand>
</feature>
<feature type="binding site" evidence="1">
    <location>
        <position position="250"/>
    </location>
    <ligand>
        <name>Ni(2+)</name>
        <dbReference type="ChEBI" id="CHEBI:49786"/>
        <label>2</label>
    </ligand>
</feature>
<feature type="binding site" evidence="1">
    <location>
        <position position="276"/>
    </location>
    <ligand>
        <name>Ni(2+)</name>
        <dbReference type="ChEBI" id="CHEBI:49786"/>
        <label>2</label>
    </ligand>
</feature>
<feature type="binding site" evidence="1">
    <location>
        <position position="364"/>
    </location>
    <ligand>
        <name>Ni(2+)</name>
        <dbReference type="ChEBI" id="CHEBI:49786"/>
        <label>1</label>
    </ligand>
</feature>
<feature type="modified residue" description="N6-carboxylysine" evidence="1">
    <location>
        <position position="221"/>
    </location>
</feature>
<gene>
    <name evidence="1" type="primary">ureC</name>
    <name type="ordered locus">DR_A0318</name>
</gene>
<evidence type="ECO:0000255" key="1">
    <source>
        <dbReference type="HAMAP-Rule" id="MF_01953"/>
    </source>
</evidence>
<name>URE1_DEIRA</name>
<keyword id="KW-0963">Cytoplasm</keyword>
<keyword id="KW-0378">Hydrolase</keyword>
<keyword id="KW-0479">Metal-binding</keyword>
<keyword id="KW-0533">Nickel</keyword>
<keyword id="KW-1185">Reference proteome</keyword>
<sequence length="568" mass="60487">MKVSRQQYADLYGPTVGDRVRLGDTELLIEVERDLTTYGEEVKFGGGKVIRDGLGQSSAATRDDANVPDLVITNALILDYWGVIKADVGVKNGRISAIGKAGNPGTQDGVTPGLTIAASTEIVAGEGLVLTAGGVDTHIHFIAPQQCWTALESGVTTMIGGGTGPTAGTSATTCTPGQWHIHRMLESLAGLPLNFGLLGKGNASTQPPLAEQIRAGALGLKLHEDWGTTPAAIHAALSVAEDYDVQVAIHTDTLNESGFVEDAIRAFAGRTIHTFHTEGAGGGHAPDIIRVAGLPNVLPSSTNPTMPFTVNTIHEHLDMLMVCHHLSPRIPEDVHFAESRIRPETIAAEDVLHDLGVFSMMSSDSQAMGRVGEVITRTWQAAHKMKVQRGPLAPDGRADNFRARRYVAKYTINPAIAHGISHEVGSVEVGKLADLVLWSPAFFGAKPSLILKGGLVVAAQMGDANASIPTPQPVYPRPMFAAYGGCPDATCLHFVSQAGLEGGHLPDVGRRYSAVKHTRDIGKKDMQLNAETPDIQVNPETYEVRVNGELVTCEPVDELPLAQKYFLF</sequence>
<organism>
    <name type="scientific">Deinococcus radiodurans (strain ATCC 13939 / DSM 20539 / JCM 16871 / CCUG 27074 / LMG 4051 / NBRC 15346 / NCIMB 9279 / VKM B-1422 / R1)</name>
    <dbReference type="NCBI Taxonomy" id="243230"/>
    <lineage>
        <taxon>Bacteria</taxon>
        <taxon>Thermotogati</taxon>
        <taxon>Deinococcota</taxon>
        <taxon>Deinococci</taxon>
        <taxon>Deinococcales</taxon>
        <taxon>Deinococcaceae</taxon>
        <taxon>Deinococcus</taxon>
    </lineage>
</organism>
<dbReference type="EC" id="3.5.1.5" evidence="1"/>
<dbReference type="EMBL" id="AE001825">
    <property type="protein sequence ID" value="AAF12461.1"/>
    <property type="molecule type" value="Genomic_DNA"/>
</dbReference>
<dbReference type="PIR" id="C75586">
    <property type="entry name" value="C75586"/>
</dbReference>
<dbReference type="RefSeq" id="NP_285641.1">
    <property type="nucleotide sequence ID" value="NC_001264.1"/>
</dbReference>
<dbReference type="RefSeq" id="WP_010889577.1">
    <property type="nucleotide sequence ID" value="NC_001264.1"/>
</dbReference>
<dbReference type="SMR" id="Q9RYJ4"/>
<dbReference type="FunCoup" id="Q9RYJ4">
    <property type="interactions" value="233"/>
</dbReference>
<dbReference type="STRING" id="243230.DR_A0318"/>
<dbReference type="MEROPS" id="M38.982"/>
<dbReference type="PaxDb" id="243230-DR_A0318"/>
<dbReference type="EnsemblBacteria" id="AAF12461">
    <property type="protein sequence ID" value="AAF12461"/>
    <property type="gene ID" value="DR_A0318"/>
</dbReference>
<dbReference type="GeneID" id="69519202"/>
<dbReference type="KEGG" id="dra:DR_A0318"/>
<dbReference type="PATRIC" id="fig|243230.17.peg.3208"/>
<dbReference type="eggNOG" id="COG0804">
    <property type="taxonomic scope" value="Bacteria"/>
</dbReference>
<dbReference type="HOGENOM" id="CLU_000980_0_0_0"/>
<dbReference type="InParanoid" id="Q9RYJ4"/>
<dbReference type="OrthoDB" id="9802793at2"/>
<dbReference type="UniPathway" id="UPA00258">
    <property type="reaction ID" value="UER00370"/>
</dbReference>
<dbReference type="Proteomes" id="UP000002524">
    <property type="component" value="Chromosome 2"/>
</dbReference>
<dbReference type="GO" id="GO:0005737">
    <property type="term" value="C:cytoplasm"/>
    <property type="evidence" value="ECO:0007669"/>
    <property type="project" value="UniProtKB-SubCell"/>
</dbReference>
<dbReference type="GO" id="GO:0016151">
    <property type="term" value="F:nickel cation binding"/>
    <property type="evidence" value="ECO:0007669"/>
    <property type="project" value="UniProtKB-UniRule"/>
</dbReference>
<dbReference type="GO" id="GO:0009039">
    <property type="term" value="F:urease activity"/>
    <property type="evidence" value="ECO:0007669"/>
    <property type="project" value="UniProtKB-UniRule"/>
</dbReference>
<dbReference type="GO" id="GO:0043419">
    <property type="term" value="P:urea catabolic process"/>
    <property type="evidence" value="ECO:0007669"/>
    <property type="project" value="UniProtKB-UniRule"/>
</dbReference>
<dbReference type="CDD" id="cd00375">
    <property type="entry name" value="Urease_alpha"/>
    <property type="match status" value="1"/>
</dbReference>
<dbReference type="Gene3D" id="3.20.20.140">
    <property type="entry name" value="Metal-dependent hydrolases"/>
    <property type="match status" value="1"/>
</dbReference>
<dbReference type="Gene3D" id="2.30.40.10">
    <property type="entry name" value="Urease, subunit C, domain 1"/>
    <property type="match status" value="1"/>
</dbReference>
<dbReference type="HAMAP" id="MF_01953">
    <property type="entry name" value="Urease_alpha"/>
    <property type="match status" value="1"/>
</dbReference>
<dbReference type="InterPro" id="IPR006680">
    <property type="entry name" value="Amidohydro-rel"/>
</dbReference>
<dbReference type="InterPro" id="IPR011059">
    <property type="entry name" value="Metal-dep_hydrolase_composite"/>
</dbReference>
<dbReference type="InterPro" id="IPR032466">
    <property type="entry name" value="Metal_Hydrolase"/>
</dbReference>
<dbReference type="InterPro" id="IPR011612">
    <property type="entry name" value="Urease_alpha_N_dom"/>
</dbReference>
<dbReference type="InterPro" id="IPR050112">
    <property type="entry name" value="Urease_alpha_subunit"/>
</dbReference>
<dbReference type="InterPro" id="IPR017950">
    <property type="entry name" value="Urease_AS"/>
</dbReference>
<dbReference type="InterPro" id="IPR005848">
    <property type="entry name" value="Urease_asu"/>
</dbReference>
<dbReference type="InterPro" id="IPR017951">
    <property type="entry name" value="Urease_asu_c"/>
</dbReference>
<dbReference type="InterPro" id="IPR029754">
    <property type="entry name" value="Urease_Ni-bd"/>
</dbReference>
<dbReference type="NCBIfam" id="NF009685">
    <property type="entry name" value="PRK13206.1"/>
    <property type="match status" value="1"/>
</dbReference>
<dbReference type="NCBIfam" id="NF009686">
    <property type="entry name" value="PRK13207.1"/>
    <property type="match status" value="1"/>
</dbReference>
<dbReference type="NCBIfam" id="TIGR01792">
    <property type="entry name" value="urease_alph"/>
    <property type="match status" value="1"/>
</dbReference>
<dbReference type="PANTHER" id="PTHR43440">
    <property type="entry name" value="UREASE"/>
    <property type="match status" value="1"/>
</dbReference>
<dbReference type="PANTHER" id="PTHR43440:SF1">
    <property type="entry name" value="UREASE"/>
    <property type="match status" value="1"/>
</dbReference>
<dbReference type="Pfam" id="PF01979">
    <property type="entry name" value="Amidohydro_1"/>
    <property type="match status" value="1"/>
</dbReference>
<dbReference type="Pfam" id="PF00449">
    <property type="entry name" value="Urease_alpha"/>
    <property type="match status" value="1"/>
</dbReference>
<dbReference type="PRINTS" id="PR01752">
    <property type="entry name" value="UREASE"/>
</dbReference>
<dbReference type="SUPFAM" id="SSF51338">
    <property type="entry name" value="Composite domain of metallo-dependent hydrolases"/>
    <property type="match status" value="1"/>
</dbReference>
<dbReference type="SUPFAM" id="SSF51556">
    <property type="entry name" value="Metallo-dependent hydrolases"/>
    <property type="match status" value="1"/>
</dbReference>
<dbReference type="PROSITE" id="PS01120">
    <property type="entry name" value="UREASE_1"/>
    <property type="match status" value="1"/>
</dbReference>
<dbReference type="PROSITE" id="PS00145">
    <property type="entry name" value="UREASE_2"/>
    <property type="match status" value="1"/>
</dbReference>
<dbReference type="PROSITE" id="PS51368">
    <property type="entry name" value="UREASE_3"/>
    <property type="match status" value="1"/>
</dbReference>
<protein>
    <recommendedName>
        <fullName evidence="1">Urease subunit alpha</fullName>
        <ecNumber evidence="1">3.5.1.5</ecNumber>
    </recommendedName>
    <alternativeName>
        <fullName evidence="1">Urea amidohydrolase subunit alpha</fullName>
    </alternativeName>
</protein>
<comment type="catalytic activity">
    <reaction evidence="1">
        <text>urea + 2 H2O + H(+) = hydrogencarbonate + 2 NH4(+)</text>
        <dbReference type="Rhea" id="RHEA:20557"/>
        <dbReference type="ChEBI" id="CHEBI:15377"/>
        <dbReference type="ChEBI" id="CHEBI:15378"/>
        <dbReference type="ChEBI" id="CHEBI:16199"/>
        <dbReference type="ChEBI" id="CHEBI:17544"/>
        <dbReference type="ChEBI" id="CHEBI:28938"/>
        <dbReference type="EC" id="3.5.1.5"/>
    </reaction>
</comment>
<comment type="cofactor">
    <cofactor evidence="1">
        <name>Ni cation</name>
        <dbReference type="ChEBI" id="CHEBI:25516"/>
    </cofactor>
    <text evidence="1">Binds 2 nickel ions per subunit.</text>
</comment>
<comment type="pathway">
    <text evidence="1">Nitrogen metabolism; urea degradation; CO(2) and NH(3) from urea (urease route): step 1/1.</text>
</comment>
<comment type="subunit">
    <text evidence="1">Heterohexamer of 3 UreC (alpha) and 3 UreAB (gamma/beta) subunits.</text>
</comment>
<comment type="subcellular location">
    <subcellularLocation>
        <location evidence="1">Cytoplasm</location>
    </subcellularLocation>
</comment>
<comment type="PTM">
    <text evidence="1">Carboxylation allows a single lysine to coordinate two nickel ions.</text>
</comment>
<comment type="similarity">
    <text evidence="1">Belongs to the metallo-dependent hydrolases superfamily. Urease alpha subunit family.</text>
</comment>
<proteinExistence type="inferred from homology"/>
<accession>Q9RYJ4</accession>